<sequence length="284" mass="32151">MLATKAKAYWQLTRMNRPIGTLLLLWPTLWSLIIAAKGMPDFDVLVVFILGVVLMRSAGCVINDFADRKVDGHVKRTKQRPLPSGLVSSKEAIVLFLVLAVVSFLLVLTMNPLTIKLSFIGVGLAFIYPFMKRFTHLPQLFLGLAFSWAIPMAWAAQTNELPSIVWFIFVINALWTIAYDTQYAMVDRDDDLKIGIKSTAILFGRFDKLMVGALQLVTLAMLIALGMHYQLGDTFYWALLVSGSLFVYQQHLMRHRDRDLCFQAFLNNNYVGMAVTVGLFITFW</sequence>
<proteinExistence type="inferred from homology"/>
<protein>
    <recommendedName>
        <fullName evidence="1">4-hydroxybenzoate octaprenyltransferase</fullName>
        <ecNumber evidence="1">2.5.1.39</ecNumber>
    </recommendedName>
    <alternativeName>
        <fullName evidence="1">4-HB polyprenyltransferase</fullName>
    </alternativeName>
</protein>
<organism>
    <name type="scientific">Vibrio atlanticus (strain LGP32)</name>
    <name type="common">Vibrio splendidus (strain Mel32)</name>
    <dbReference type="NCBI Taxonomy" id="575788"/>
    <lineage>
        <taxon>Bacteria</taxon>
        <taxon>Pseudomonadati</taxon>
        <taxon>Pseudomonadota</taxon>
        <taxon>Gammaproteobacteria</taxon>
        <taxon>Vibrionales</taxon>
        <taxon>Vibrionaceae</taxon>
        <taxon>Vibrio</taxon>
    </lineage>
</organism>
<reference key="1">
    <citation type="submission" date="2009-02" db="EMBL/GenBank/DDBJ databases">
        <title>Vibrio splendidus str. LGP32 complete genome.</title>
        <authorList>
            <person name="Mazel D."/>
            <person name="Le Roux F."/>
        </authorList>
    </citation>
    <scope>NUCLEOTIDE SEQUENCE [LARGE SCALE GENOMIC DNA]</scope>
    <source>
        <strain>LGP32</strain>
    </source>
</reference>
<feature type="chain" id="PRO_1000186696" description="4-hydroxybenzoate octaprenyltransferase">
    <location>
        <begin position="1"/>
        <end position="284"/>
    </location>
</feature>
<feature type="transmembrane region" description="Helical" evidence="1">
    <location>
        <begin position="19"/>
        <end position="39"/>
    </location>
</feature>
<feature type="transmembrane region" description="Helical" evidence="1">
    <location>
        <begin position="42"/>
        <end position="62"/>
    </location>
</feature>
<feature type="transmembrane region" description="Helical" evidence="1">
    <location>
        <begin position="93"/>
        <end position="113"/>
    </location>
</feature>
<feature type="transmembrane region" description="Helical" evidence="1">
    <location>
        <begin position="114"/>
        <end position="134"/>
    </location>
</feature>
<feature type="transmembrane region" description="Helical" evidence="1">
    <location>
        <begin position="136"/>
        <end position="156"/>
    </location>
</feature>
<feature type="transmembrane region" description="Helical" evidence="1">
    <location>
        <begin position="161"/>
        <end position="181"/>
    </location>
</feature>
<feature type="transmembrane region" description="Helical" evidence="1">
    <location>
        <begin position="209"/>
        <end position="229"/>
    </location>
</feature>
<feature type="transmembrane region" description="Helical" evidence="1">
    <location>
        <begin position="235"/>
        <end position="252"/>
    </location>
</feature>
<feature type="transmembrane region" description="Helical" evidence="1">
    <location>
        <begin position="264"/>
        <end position="284"/>
    </location>
</feature>
<gene>
    <name evidence="1" type="primary">ubiA</name>
    <name type="ordered locus">VS_3012</name>
</gene>
<accession>B7VMA0</accession>
<name>UBIA_VIBA3</name>
<keyword id="KW-0997">Cell inner membrane</keyword>
<keyword id="KW-1003">Cell membrane</keyword>
<keyword id="KW-0460">Magnesium</keyword>
<keyword id="KW-0472">Membrane</keyword>
<keyword id="KW-0808">Transferase</keyword>
<keyword id="KW-0812">Transmembrane</keyword>
<keyword id="KW-1133">Transmembrane helix</keyword>
<keyword id="KW-0831">Ubiquinone biosynthesis</keyword>
<comment type="function">
    <text evidence="1">Catalyzes the prenylation of para-hydroxybenzoate (PHB) with an all-trans polyprenyl group. Mediates the second step in the final reaction sequence of ubiquinone-8 (UQ-8) biosynthesis, which is the condensation of the polyisoprenoid side chain with PHB, generating the first membrane-bound Q intermediate 3-octaprenyl-4-hydroxybenzoate.</text>
</comment>
<comment type="catalytic activity">
    <reaction evidence="1">
        <text>all-trans-octaprenyl diphosphate + 4-hydroxybenzoate = 4-hydroxy-3-(all-trans-octaprenyl)benzoate + diphosphate</text>
        <dbReference type="Rhea" id="RHEA:27782"/>
        <dbReference type="ChEBI" id="CHEBI:1617"/>
        <dbReference type="ChEBI" id="CHEBI:17879"/>
        <dbReference type="ChEBI" id="CHEBI:33019"/>
        <dbReference type="ChEBI" id="CHEBI:57711"/>
        <dbReference type="EC" id="2.5.1.39"/>
    </reaction>
</comment>
<comment type="cofactor">
    <cofactor evidence="1">
        <name>Mg(2+)</name>
        <dbReference type="ChEBI" id="CHEBI:18420"/>
    </cofactor>
</comment>
<comment type="pathway">
    <text evidence="1">Cofactor biosynthesis; ubiquinone biosynthesis.</text>
</comment>
<comment type="subcellular location">
    <subcellularLocation>
        <location evidence="1">Cell inner membrane</location>
        <topology evidence="1">Multi-pass membrane protein</topology>
    </subcellularLocation>
</comment>
<comment type="similarity">
    <text evidence="1">Belongs to the UbiA prenyltransferase family.</text>
</comment>
<evidence type="ECO:0000255" key="1">
    <source>
        <dbReference type="HAMAP-Rule" id="MF_01635"/>
    </source>
</evidence>
<dbReference type="EC" id="2.5.1.39" evidence="1"/>
<dbReference type="EMBL" id="FM954972">
    <property type="protein sequence ID" value="CAV20290.1"/>
    <property type="molecule type" value="Genomic_DNA"/>
</dbReference>
<dbReference type="SMR" id="B7VMA0"/>
<dbReference type="STRING" id="575788.VS_3012"/>
<dbReference type="KEGG" id="vsp:VS_3012"/>
<dbReference type="PATRIC" id="fig|575788.5.peg.4202"/>
<dbReference type="eggNOG" id="COG0382">
    <property type="taxonomic scope" value="Bacteria"/>
</dbReference>
<dbReference type="HOGENOM" id="CLU_034879_1_0_6"/>
<dbReference type="UniPathway" id="UPA00232"/>
<dbReference type="Proteomes" id="UP000009100">
    <property type="component" value="Chromosome 1"/>
</dbReference>
<dbReference type="GO" id="GO:0005886">
    <property type="term" value="C:plasma membrane"/>
    <property type="evidence" value="ECO:0007669"/>
    <property type="project" value="UniProtKB-SubCell"/>
</dbReference>
<dbReference type="GO" id="GO:0008412">
    <property type="term" value="F:4-hydroxybenzoate polyprenyltransferase activity"/>
    <property type="evidence" value="ECO:0007669"/>
    <property type="project" value="UniProtKB-UniRule"/>
</dbReference>
<dbReference type="GO" id="GO:0006744">
    <property type="term" value="P:ubiquinone biosynthetic process"/>
    <property type="evidence" value="ECO:0007669"/>
    <property type="project" value="UniProtKB-UniRule"/>
</dbReference>
<dbReference type="CDD" id="cd13959">
    <property type="entry name" value="PT_UbiA_COQ2"/>
    <property type="match status" value="1"/>
</dbReference>
<dbReference type="FunFam" id="1.10.357.140:FF:000002">
    <property type="entry name" value="4-hydroxybenzoate octaprenyltransferase"/>
    <property type="match status" value="1"/>
</dbReference>
<dbReference type="FunFam" id="1.20.120.1780:FF:000001">
    <property type="entry name" value="4-hydroxybenzoate octaprenyltransferase"/>
    <property type="match status" value="1"/>
</dbReference>
<dbReference type="Gene3D" id="1.10.357.140">
    <property type="entry name" value="UbiA prenyltransferase"/>
    <property type="match status" value="1"/>
</dbReference>
<dbReference type="Gene3D" id="1.20.120.1780">
    <property type="entry name" value="UbiA prenyltransferase"/>
    <property type="match status" value="1"/>
</dbReference>
<dbReference type="HAMAP" id="MF_01635">
    <property type="entry name" value="UbiA"/>
    <property type="match status" value="1"/>
</dbReference>
<dbReference type="InterPro" id="IPR006370">
    <property type="entry name" value="HB_polyprenyltransferase-like"/>
</dbReference>
<dbReference type="InterPro" id="IPR039653">
    <property type="entry name" value="Prenyltransferase"/>
</dbReference>
<dbReference type="InterPro" id="IPR000537">
    <property type="entry name" value="UbiA_prenyltransferase"/>
</dbReference>
<dbReference type="InterPro" id="IPR044878">
    <property type="entry name" value="UbiA_sf"/>
</dbReference>
<dbReference type="NCBIfam" id="TIGR01474">
    <property type="entry name" value="ubiA_proteo"/>
    <property type="match status" value="1"/>
</dbReference>
<dbReference type="PANTHER" id="PTHR11048:SF28">
    <property type="entry name" value="4-HYDROXYBENZOATE POLYPRENYLTRANSFERASE, MITOCHONDRIAL"/>
    <property type="match status" value="1"/>
</dbReference>
<dbReference type="PANTHER" id="PTHR11048">
    <property type="entry name" value="PRENYLTRANSFERASES"/>
    <property type="match status" value="1"/>
</dbReference>
<dbReference type="Pfam" id="PF01040">
    <property type="entry name" value="UbiA"/>
    <property type="match status" value="1"/>
</dbReference>